<comment type="function">
    <text evidence="1">Omega-conotoxins act at presynaptic membranes, they bind and block voltage-gated calcium channels (Cav).</text>
</comment>
<comment type="subcellular location">
    <subcellularLocation>
        <location>Secreted</location>
    </subcellularLocation>
</comment>
<comment type="tissue specificity">
    <text>Expressed by the venom duct.</text>
</comment>
<comment type="domain">
    <text evidence="1">The presence of a 'disulfide through disulfide knot' structurally defines this protein as a knottin.</text>
</comment>
<comment type="domain">
    <text>The cysteine framework is VI/VII (C-C-CC-C-C).</text>
</comment>
<comment type="similarity">
    <text evidence="4">Belongs to the conotoxin O1 superfamily.</text>
</comment>
<sequence>MKLTCVVIVAVLLLTACQLLTADDSRGTQKHRSLRSTTKVSKATDCIEAGNYCGPTVMKICCGFCSPFSKICMNYPQN</sequence>
<feature type="signal peptide" evidence="2">
    <location>
        <begin position="1"/>
        <end position="22"/>
    </location>
</feature>
<feature type="propeptide" id="PRO_0000366091" evidence="3">
    <location>
        <begin position="23"/>
        <end position="42"/>
    </location>
</feature>
<feature type="peptide" id="PRO_0000366092" description="Omega-conotoxin-like Ac6.5">
    <location>
        <begin position="43"/>
        <end position="78"/>
    </location>
</feature>
<feature type="modified residue" description="4-hydroxyproline" evidence="3">
    <location>
        <position position="55"/>
    </location>
</feature>
<feature type="modified residue" description="4-hydroxyproline" evidence="3">
    <location>
        <position position="67"/>
    </location>
</feature>
<feature type="disulfide bond" evidence="1">
    <location>
        <begin position="46"/>
        <end position="62"/>
    </location>
</feature>
<feature type="disulfide bond" evidence="1">
    <location>
        <begin position="53"/>
        <end position="65"/>
    </location>
</feature>
<feature type="disulfide bond" evidence="1">
    <location>
        <begin position="61"/>
        <end position="72"/>
    </location>
</feature>
<evidence type="ECO:0000250" key="1"/>
<evidence type="ECO:0000255" key="2"/>
<evidence type="ECO:0000269" key="3">
    <source>
    </source>
</evidence>
<evidence type="ECO:0000305" key="4"/>
<name>O165_CONAH</name>
<keyword id="KW-0108">Calcium channel impairing toxin</keyword>
<keyword id="KW-0903">Direct protein sequencing</keyword>
<keyword id="KW-1015">Disulfide bond</keyword>
<keyword id="KW-0379">Hydroxylation</keyword>
<keyword id="KW-0872">Ion channel impairing toxin</keyword>
<keyword id="KW-0960">Knottin</keyword>
<keyword id="KW-0528">Neurotoxin</keyword>
<keyword id="KW-0638">Presynaptic neurotoxin</keyword>
<keyword id="KW-0964">Secreted</keyword>
<keyword id="KW-0732">Signal</keyword>
<keyword id="KW-0800">Toxin</keyword>
<keyword id="KW-1218">Voltage-gated calcium channel impairing toxin</keyword>
<proteinExistence type="evidence at protein level"/>
<accession>P0C8V9</accession>
<dbReference type="SMR" id="P0C8V9"/>
<dbReference type="ConoServer" id="3702">
    <property type="toxin name" value="Ac6.5 precursor"/>
</dbReference>
<dbReference type="GO" id="GO:0005576">
    <property type="term" value="C:extracellular region"/>
    <property type="evidence" value="ECO:0007669"/>
    <property type="project" value="UniProtKB-SubCell"/>
</dbReference>
<dbReference type="GO" id="GO:0044231">
    <property type="term" value="C:host cell presynaptic membrane"/>
    <property type="evidence" value="ECO:0007669"/>
    <property type="project" value="UniProtKB-KW"/>
</dbReference>
<dbReference type="GO" id="GO:0005246">
    <property type="term" value="F:calcium channel regulator activity"/>
    <property type="evidence" value="ECO:0007669"/>
    <property type="project" value="UniProtKB-KW"/>
</dbReference>
<dbReference type="GO" id="GO:0008200">
    <property type="term" value="F:ion channel inhibitor activity"/>
    <property type="evidence" value="ECO:0007669"/>
    <property type="project" value="InterPro"/>
</dbReference>
<dbReference type="GO" id="GO:0090729">
    <property type="term" value="F:toxin activity"/>
    <property type="evidence" value="ECO:0007669"/>
    <property type="project" value="UniProtKB-KW"/>
</dbReference>
<dbReference type="InterPro" id="IPR004214">
    <property type="entry name" value="Conotoxin"/>
</dbReference>
<dbReference type="InterPro" id="IPR012321">
    <property type="entry name" value="Conotoxin_omega-typ_CS"/>
</dbReference>
<dbReference type="Pfam" id="PF02950">
    <property type="entry name" value="Conotoxin"/>
    <property type="match status" value="1"/>
</dbReference>
<dbReference type="PROSITE" id="PS60004">
    <property type="entry name" value="OMEGA_CONOTOXIN"/>
    <property type="match status" value="1"/>
</dbReference>
<protein>
    <recommendedName>
        <fullName>Omega-conotoxin-like Ac6.5</fullName>
    </recommendedName>
</protein>
<organism>
    <name type="scientific">Conus achatinus</name>
    <name type="common">Little frog cone</name>
    <dbReference type="NCBI Taxonomy" id="369967"/>
    <lineage>
        <taxon>Eukaryota</taxon>
        <taxon>Metazoa</taxon>
        <taxon>Spiralia</taxon>
        <taxon>Lophotrochozoa</taxon>
        <taxon>Mollusca</taxon>
        <taxon>Gastropoda</taxon>
        <taxon>Caenogastropoda</taxon>
        <taxon>Neogastropoda</taxon>
        <taxon>Conoidea</taxon>
        <taxon>Conidae</taxon>
        <taxon>Conus</taxon>
        <taxon>Pionoconus</taxon>
    </lineage>
</organism>
<reference key="1">
    <citation type="journal article" date="2008" name="J. Mass Spectrom.">
        <title>Probing peptide libraries from Conus achatinus using mass spectrometry and cDNA sequencing: identification of delta and omega-conotoxins.</title>
        <authorList>
            <person name="Gowd K.H."/>
            <person name="Dewan K.K."/>
            <person name="Iengar P."/>
            <person name="Krishnan K.S."/>
            <person name="Balaram P."/>
        </authorList>
    </citation>
    <scope>NUCLEOTIDE SEQUENCE [MRNA]</scope>
    <scope>PROTEIN SEQUENCE OF 43-78</scope>
    <scope>HYDROXYLATION AT PRO-55 AND PRO-67</scope>
    <scope>IDENTIFICATION BY MASS SPECTROMETRY</scope>
    <source>
        <tissue>Venom</tissue>
        <tissue>Venom duct</tissue>
    </source>
</reference>